<gene>
    <name type="primary">atp23</name>
    <name type="ORF">ACLA_079570</name>
</gene>
<reference key="1">
    <citation type="journal article" date="2008" name="PLoS Genet.">
        <title>Genomic islands in the pathogenic filamentous fungus Aspergillus fumigatus.</title>
        <authorList>
            <person name="Fedorova N.D."/>
            <person name="Khaldi N."/>
            <person name="Joardar V.S."/>
            <person name="Maiti R."/>
            <person name="Amedeo P."/>
            <person name="Anderson M.J."/>
            <person name="Crabtree J."/>
            <person name="Silva J.C."/>
            <person name="Badger J.H."/>
            <person name="Albarraq A."/>
            <person name="Angiuoli S."/>
            <person name="Bussey H."/>
            <person name="Bowyer P."/>
            <person name="Cotty P.J."/>
            <person name="Dyer P.S."/>
            <person name="Egan A."/>
            <person name="Galens K."/>
            <person name="Fraser-Liggett C.M."/>
            <person name="Haas B.J."/>
            <person name="Inman J.M."/>
            <person name="Kent R."/>
            <person name="Lemieux S."/>
            <person name="Malavazi I."/>
            <person name="Orvis J."/>
            <person name="Roemer T."/>
            <person name="Ronning C.M."/>
            <person name="Sundaram J.P."/>
            <person name="Sutton G."/>
            <person name="Turner G."/>
            <person name="Venter J.C."/>
            <person name="White O.R."/>
            <person name="Whitty B.R."/>
            <person name="Youngman P."/>
            <person name="Wolfe K.H."/>
            <person name="Goldman G.H."/>
            <person name="Wortman J.R."/>
            <person name="Jiang B."/>
            <person name="Denning D.W."/>
            <person name="Nierman W.C."/>
        </authorList>
    </citation>
    <scope>NUCLEOTIDE SEQUENCE [LARGE SCALE GENOMIC DNA]</scope>
    <source>
        <strain>ATCC 1007 / CBS 513.65 / DSM 816 / NCTC 3887 / NRRL 1 / QM 1276 / 107</strain>
    </source>
</reference>
<name>ATP23_ASPCL</name>
<evidence type="ECO:0000250" key="1"/>
<evidence type="ECO:0000255" key="2">
    <source>
        <dbReference type="PROSITE-ProRule" id="PRU10095"/>
    </source>
</evidence>
<evidence type="ECO:0000305" key="3"/>
<protein>
    <recommendedName>
        <fullName>Mitochondrial inner membrane protease atp23</fullName>
        <ecNumber>3.4.24.-</ecNumber>
    </recommendedName>
</protein>
<proteinExistence type="inferred from homology"/>
<sequence>MSESQPGASSTTSNKCDSGFIPGDDTFTQWRNIFSILMGKMTDEGKEQFRVARDLRNEAADCKRCEDQRDYLLQYSPVIRYLSDNIRQLGGDLHSHNIYCRRCTNRKAGGFDPEYGILLCANEMKDQGHLEDTMAHEMIHAYDHLRFKVDWSNNLRHAACTEIRASSLSGECRWAREFFRRGQWKFTQQHQECVRRRAILSVRARPGCKDEAHAEKVVNEVWDSCFRDTRPFDEIYR</sequence>
<dbReference type="EC" id="3.4.24.-"/>
<dbReference type="EMBL" id="DS027060">
    <property type="protein sequence ID" value="EAW06273.1"/>
    <property type="status" value="ALT_SEQ"/>
    <property type="molecule type" value="Genomic_DNA"/>
</dbReference>
<dbReference type="RefSeq" id="XP_001267699.1">
    <property type="nucleotide sequence ID" value="XM_001267698.1"/>
</dbReference>
<dbReference type="STRING" id="344612.A1CSI6"/>
<dbReference type="GeneID" id="4700016"/>
<dbReference type="KEGG" id="act:ACLA_079570"/>
<dbReference type="eggNOG" id="KOG3314">
    <property type="taxonomic scope" value="Eukaryota"/>
</dbReference>
<dbReference type="OrthoDB" id="285308at2759"/>
<dbReference type="Proteomes" id="UP000006701">
    <property type="component" value="Unassembled WGS sequence"/>
</dbReference>
<dbReference type="GO" id="GO:0005743">
    <property type="term" value="C:mitochondrial inner membrane"/>
    <property type="evidence" value="ECO:0007669"/>
    <property type="project" value="UniProtKB-SubCell"/>
</dbReference>
<dbReference type="GO" id="GO:0046872">
    <property type="term" value="F:metal ion binding"/>
    <property type="evidence" value="ECO:0007669"/>
    <property type="project" value="UniProtKB-KW"/>
</dbReference>
<dbReference type="GO" id="GO:0004222">
    <property type="term" value="F:metalloendopeptidase activity"/>
    <property type="evidence" value="ECO:0007669"/>
    <property type="project" value="InterPro"/>
</dbReference>
<dbReference type="GO" id="GO:0034982">
    <property type="term" value="P:mitochondrial protein processing"/>
    <property type="evidence" value="ECO:0007669"/>
    <property type="project" value="TreeGrafter"/>
</dbReference>
<dbReference type="GO" id="GO:0033615">
    <property type="term" value="P:mitochondrial proton-transporting ATP synthase complex assembly"/>
    <property type="evidence" value="ECO:0007669"/>
    <property type="project" value="TreeGrafter"/>
</dbReference>
<dbReference type="InterPro" id="IPR019165">
    <property type="entry name" value="Peptidase_M76_ATP23"/>
</dbReference>
<dbReference type="PANTHER" id="PTHR21711">
    <property type="entry name" value="MITOCHONDRIAL INNER MEMBRANE PROTEASE"/>
    <property type="match status" value="1"/>
</dbReference>
<dbReference type="PANTHER" id="PTHR21711:SF0">
    <property type="entry name" value="MITOCHONDRIAL INNER MEMBRANE PROTEASE ATP23 HOMOLOG"/>
    <property type="match status" value="1"/>
</dbReference>
<dbReference type="Pfam" id="PF09768">
    <property type="entry name" value="Peptidase_M76"/>
    <property type="match status" value="1"/>
</dbReference>
<dbReference type="PROSITE" id="PS00142">
    <property type="entry name" value="ZINC_PROTEASE"/>
    <property type="match status" value="1"/>
</dbReference>
<feature type="chain" id="PRO_0000330052" description="Mitochondrial inner membrane protease atp23">
    <location>
        <begin position="1"/>
        <end position="237"/>
    </location>
</feature>
<feature type="active site" evidence="2">
    <location>
        <position position="137"/>
    </location>
</feature>
<feature type="binding site" evidence="1">
    <location>
        <position position="136"/>
    </location>
    <ligand>
        <name>a divalent metal cation</name>
        <dbReference type="ChEBI" id="CHEBI:60240"/>
        <note>catalytic</note>
    </ligand>
</feature>
<feature type="binding site" evidence="1">
    <location>
        <position position="140"/>
    </location>
    <ligand>
        <name>a divalent metal cation</name>
        <dbReference type="ChEBI" id="CHEBI:60240"/>
        <note>catalytic</note>
    </ligand>
</feature>
<keyword id="KW-0378">Hydrolase</keyword>
<keyword id="KW-0472">Membrane</keyword>
<keyword id="KW-0479">Metal-binding</keyword>
<keyword id="KW-0482">Metalloprotease</keyword>
<keyword id="KW-0496">Mitochondrion</keyword>
<keyword id="KW-0999">Mitochondrion inner membrane</keyword>
<keyword id="KW-0645">Protease</keyword>
<keyword id="KW-1185">Reference proteome</keyword>
<organism>
    <name type="scientific">Aspergillus clavatus (strain ATCC 1007 / CBS 513.65 / DSM 816 / NCTC 3887 / NRRL 1 / QM 1276 / 107)</name>
    <dbReference type="NCBI Taxonomy" id="344612"/>
    <lineage>
        <taxon>Eukaryota</taxon>
        <taxon>Fungi</taxon>
        <taxon>Dikarya</taxon>
        <taxon>Ascomycota</taxon>
        <taxon>Pezizomycotina</taxon>
        <taxon>Eurotiomycetes</taxon>
        <taxon>Eurotiomycetidae</taxon>
        <taxon>Eurotiales</taxon>
        <taxon>Aspergillaceae</taxon>
        <taxon>Aspergillus</taxon>
        <taxon>Aspergillus subgen. Fumigati</taxon>
    </lineage>
</organism>
<comment type="function">
    <text evidence="1">Has a dual role in the assembly of mitochondrial ATPase. Acts as a protease that removes N-terminal residues of mitochondrial ATPase CF(0) subunit 6 at the intermembrane space side. Also involved in the correct assembly of the membrane-embedded ATPase CF(0) particle, probably mediating association of subunit 6 with the subunit 9 ring (By similarity).</text>
</comment>
<comment type="subcellular location">
    <subcellularLocation>
        <location>Mitochondrion inner membrane</location>
        <topology>Peripheral membrane protein</topology>
        <orientation>Intermembrane side</orientation>
    </subcellularLocation>
    <text evidence="1">Associates loosely with the inner membrane.</text>
</comment>
<comment type="similarity">
    <text evidence="3">Belongs to the peptidase M76 family.</text>
</comment>
<comment type="sequence caution" evidence="3">
    <conflict type="erroneous gene model prediction">
        <sequence resource="EMBL-CDS" id="EAW06273"/>
    </conflict>
</comment>
<accession>A1CSI6</accession>